<reference key="1">
    <citation type="journal article" date="2002" name="Nucleic Acids Res.">
        <title>Genome sequence of Shigella flexneri 2a: insights into pathogenicity through comparison with genomes of Escherichia coli K12 and O157.</title>
        <authorList>
            <person name="Jin Q."/>
            <person name="Yuan Z."/>
            <person name="Xu J."/>
            <person name="Wang Y."/>
            <person name="Shen Y."/>
            <person name="Lu W."/>
            <person name="Wang J."/>
            <person name="Liu H."/>
            <person name="Yang J."/>
            <person name="Yang F."/>
            <person name="Zhang X."/>
            <person name="Zhang J."/>
            <person name="Yang G."/>
            <person name="Wu H."/>
            <person name="Qu D."/>
            <person name="Dong J."/>
            <person name="Sun L."/>
            <person name="Xue Y."/>
            <person name="Zhao A."/>
            <person name="Gao Y."/>
            <person name="Zhu J."/>
            <person name="Kan B."/>
            <person name="Ding K."/>
            <person name="Chen S."/>
            <person name="Cheng H."/>
            <person name="Yao Z."/>
            <person name="He B."/>
            <person name="Chen R."/>
            <person name="Ma D."/>
            <person name="Qiang B."/>
            <person name="Wen Y."/>
            <person name="Hou Y."/>
            <person name="Yu J."/>
        </authorList>
    </citation>
    <scope>NUCLEOTIDE SEQUENCE [LARGE SCALE GENOMIC DNA]</scope>
    <source>
        <strain>301 / Serotype 2a</strain>
    </source>
</reference>
<reference key="2">
    <citation type="journal article" date="2003" name="Infect. Immun.">
        <title>Complete genome sequence and comparative genomics of Shigella flexneri serotype 2a strain 2457T.</title>
        <authorList>
            <person name="Wei J."/>
            <person name="Goldberg M.B."/>
            <person name="Burland V."/>
            <person name="Venkatesan M.M."/>
            <person name="Deng W."/>
            <person name="Fournier G."/>
            <person name="Mayhew G.F."/>
            <person name="Plunkett G. III"/>
            <person name="Rose D.J."/>
            <person name="Darling A."/>
            <person name="Mau B."/>
            <person name="Perna N.T."/>
            <person name="Payne S.M."/>
            <person name="Runyen-Janecky L.J."/>
            <person name="Zhou S."/>
            <person name="Schwartz D.C."/>
            <person name="Blattner F.R."/>
        </authorList>
    </citation>
    <scope>NUCLEOTIDE SEQUENCE [LARGE SCALE GENOMIC DNA]</scope>
    <source>
        <strain>ATCC 700930 / 2457T / Serotype 2a</strain>
    </source>
</reference>
<dbReference type="EC" id="2.4.2.17" evidence="1"/>
<dbReference type="EMBL" id="AE005674">
    <property type="protein sequence ID" value="AAN43621.2"/>
    <property type="molecule type" value="Genomic_DNA"/>
</dbReference>
<dbReference type="EMBL" id="AE014073">
    <property type="protein sequence ID" value="AAP17449.1"/>
    <property type="molecule type" value="Genomic_DNA"/>
</dbReference>
<dbReference type="RefSeq" id="NP_707914.2">
    <property type="nucleotide sequence ID" value="NC_004337.2"/>
</dbReference>
<dbReference type="RefSeq" id="WP_000131772.1">
    <property type="nucleotide sequence ID" value="NZ_WPGW01000112.1"/>
</dbReference>
<dbReference type="SMR" id="Q83KJ7"/>
<dbReference type="STRING" id="198214.SF2081"/>
<dbReference type="PaxDb" id="198214-SF2081"/>
<dbReference type="GeneID" id="1025908"/>
<dbReference type="KEGG" id="sfl:SF2081"/>
<dbReference type="KEGG" id="sfx:S2202"/>
<dbReference type="PATRIC" id="fig|198214.7.peg.2490"/>
<dbReference type="HOGENOM" id="CLU_038115_1_0_6"/>
<dbReference type="UniPathway" id="UPA00031">
    <property type="reaction ID" value="UER00006"/>
</dbReference>
<dbReference type="Proteomes" id="UP000001006">
    <property type="component" value="Chromosome"/>
</dbReference>
<dbReference type="Proteomes" id="UP000002673">
    <property type="component" value="Chromosome"/>
</dbReference>
<dbReference type="GO" id="GO:0005737">
    <property type="term" value="C:cytoplasm"/>
    <property type="evidence" value="ECO:0007669"/>
    <property type="project" value="UniProtKB-SubCell"/>
</dbReference>
<dbReference type="GO" id="GO:0005524">
    <property type="term" value="F:ATP binding"/>
    <property type="evidence" value="ECO:0007669"/>
    <property type="project" value="UniProtKB-KW"/>
</dbReference>
<dbReference type="GO" id="GO:0003879">
    <property type="term" value="F:ATP phosphoribosyltransferase activity"/>
    <property type="evidence" value="ECO:0007669"/>
    <property type="project" value="UniProtKB-UniRule"/>
</dbReference>
<dbReference type="GO" id="GO:0000287">
    <property type="term" value="F:magnesium ion binding"/>
    <property type="evidence" value="ECO:0007669"/>
    <property type="project" value="UniProtKB-UniRule"/>
</dbReference>
<dbReference type="GO" id="GO:0000105">
    <property type="term" value="P:L-histidine biosynthetic process"/>
    <property type="evidence" value="ECO:0007669"/>
    <property type="project" value="UniProtKB-UniRule"/>
</dbReference>
<dbReference type="CDD" id="cd13592">
    <property type="entry name" value="PBP2_HisGL2"/>
    <property type="match status" value="1"/>
</dbReference>
<dbReference type="FunFam" id="3.30.70.120:FF:000002">
    <property type="entry name" value="ATP phosphoribosyltransferase"/>
    <property type="match status" value="1"/>
</dbReference>
<dbReference type="FunFam" id="3.40.190.10:FF:000008">
    <property type="entry name" value="ATP phosphoribosyltransferase"/>
    <property type="match status" value="1"/>
</dbReference>
<dbReference type="Gene3D" id="3.30.70.120">
    <property type="match status" value="1"/>
</dbReference>
<dbReference type="Gene3D" id="3.40.190.10">
    <property type="entry name" value="Periplasmic binding protein-like II"/>
    <property type="match status" value="2"/>
</dbReference>
<dbReference type="HAMAP" id="MF_00079">
    <property type="entry name" value="HisG_Long"/>
    <property type="match status" value="1"/>
</dbReference>
<dbReference type="InterPro" id="IPR020621">
    <property type="entry name" value="ATP-PRT_HisG_long"/>
</dbReference>
<dbReference type="InterPro" id="IPR013820">
    <property type="entry name" value="ATP_PRibTrfase_cat"/>
</dbReference>
<dbReference type="InterPro" id="IPR018198">
    <property type="entry name" value="ATP_PRibTrfase_CS"/>
</dbReference>
<dbReference type="InterPro" id="IPR001348">
    <property type="entry name" value="ATP_PRibTrfase_HisG"/>
</dbReference>
<dbReference type="InterPro" id="IPR013115">
    <property type="entry name" value="HisG_C"/>
</dbReference>
<dbReference type="InterPro" id="IPR011322">
    <property type="entry name" value="N-reg_PII-like_a/b"/>
</dbReference>
<dbReference type="InterPro" id="IPR015867">
    <property type="entry name" value="N-reg_PII/ATP_PRibTrfase_C"/>
</dbReference>
<dbReference type="NCBIfam" id="TIGR00070">
    <property type="entry name" value="hisG"/>
    <property type="match status" value="1"/>
</dbReference>
<dbReference type="NCBIfam" id="TIGR03455">
    <property type="entry name" value="HisG_C-term"/>
    <property type="match status" value="1"/>
</dbReference>
<dbReference type="PANTHER" id="PTHR21403:SF8">
    <property type="entry name" value="ATP PHOSPHORIBOSYLTRANSFERASE"/>
    <property type="match status" value="1"/>
</dbReference>
<dbReference type="PANTHER" id="PTHR21403">
    <property type="entry name" value="ATP PHOSPHORIBOSYLTRANSFERASE ATP-PRTASE"/>
    <property type="match status" value="1"/>
</dbReference>
<dbReference type="Pfam" id="PF01634">
    <property type="entry name" value="HisG"/>
    <property type="match status" value="1"/>
</dbReference>
<dbReference type="Pfam" id="PF08029">
    <property type="entry name" value="HisG_C"/>
    <property type="match status" value="1"/>
</dbReference>
<dbReference type="SUPFAM" id="SSF54913">
    <property type="entry name" value="GlnB-like"/>
    <property type="match status" value="1"/>
</dbReference>
<dbReference type="SUPFAM" id="SSF53850">
    <property type="entry name" value="Periplasmic binding protein-like II"/>
    <property type="match status" value="1"/>
</dbReference>
<dbReference type="PROSITE" id="PS01316">
    <property type="entry name" value="ATP_P_PHORIBOSYLTR"/>
    <property type="match status" value="1"/>
</dbReference>
<gene>
    <name evidence="1" type="primary">hisG</name>
    <name type="ordered locus">SF2081</name>
    <name type="ordered locus">S2202</name>
</gene>
<organism>
    <name type="scientific">Shigella flexneri</name>
    <dbReference type="NCBI Taxonomy" id="623"/>
    <lineage>
        <taxon>Bacteria</taxon>
        <taxon>Pseudomonadati</taxon>
        <taxon>Pseudomonadota</taxon>
        <taxon>Gammaproteobacteria</taxon>
        <taxon>Enterobacterales</taxon>
        <taxon>Enterobacteriaceae</taxon>
        <taxon>Shigella</taxon>
    </lineage>
</organism>
<keyword id="KW-0028">Amino-acid biosynthesis</keyword>
<keyword id="KW-0067">ATP-binding</keyword>
<keyword id="KW-0963">Cytoplasm</keyword>
<keyword id="KW-0328">Glycosyltransferase</keyword>
<keyword id="KW-0368">Histidine biosynthesis</keyword>
<keyword id="KW-0460">Magnesium</keyword>
<keyword id="KW-0479">Metal-binding</keyword>
<keyword id="KW-0547">Nucleotide-binding</keyword>
<keyword id="KW-1185">Reference proteome</keyword>
<keyword id="KW-0808">Transferase</keyword>
<accession>Q83KJ7</accession>
<accession>Q7UCB9</accession>
<comment type="function">
    <text evidence="1">Catalyzes the condensation of ATP and 5-phosphoribose 1-diphosphate to form N'-(5'-phosphoribosyl)-ATP (PR-ATP). Has a crucial role in the pathway because the rate of histidine biosynthesis seems to be controlled primarily by regulation of HisG enzymatic activity.</text>
</comment>
<comment type="catalytic activity">
    <reaction evidence="1">
        <text>1-(5-phospho-beta-D-ribosyl)-ATP + diphosphate = 5-phospho-alpha-D-ribose 1-diphosphate + ATP</text>
        <dbReference type="Rhea" id="RHEA:18473"/>
        <dbReference type="ChEBI" id="CHEBI:30616"/>
        <dbReference type="ChEBI" id="CHEBI:33019"/>
        <dbReference type="ChEBI" id="CHEBI:58017"/>
        <dbReference type="ChEBI" id="CHEBI:73183"/>
        <dbReference type="EC" id="2.4.2.17"/>
    </reaction>
</comment>
<comment type="cofactor">
    <cofactor evidence="1">
        <name>Mg(2+)</name>
        <dbReference type="ChEBI" id="CHEBI:18420"/>
    </cofactor>
</comment>
<comment type="activity regulation">
    <text evidence="1">Feedback inhibited by histidine.</text>
</comment>
<comment type="pathway">
    <text evidence="1">Amino-acid biosynthesis; L-histidine biosynthesis; L-histidine from 5-phospho-alpha-D-ribose 1-diphosphate: step 1/9.</text>
</comment>
<comment type="subunit">
    <text evidence="1">Equilibrium between an active dimeric form, an inactive hexameric form and higher aggregates. Interconversion between the various forms is largely reversible and is influenced by the natural substrates and inhibitors of the enzyme.</text>
</comment>
<comment type="subcellular location">
    <subcellularLocation>
        <location evidence="1">Cytoplasm</location>
    </subcellularLocation>
</comment>
<comment type="similarity">
    <text evidence="1">Belongs to the ATP phosphoribosyltransferase family. Long subfamily.</text>
</comment>
<protein>
    <recommendedName>
        <fullName evidence="1">ATP phosphoribosyltransferase</fullName>
        <shortName evidence="1">ATP-PRT</shortName>
        <shortName evidence="1">ATP-PRTase</shortName>
        <ecNumber evidence="1">2.4.2.17</ecNumber>
    </recommendedName>
</protein>
<proteinExistence type="inferred from homology"/>
<name>HIS1_SHIFL</name>
<evidence type="ECO:0000255" key="1">
    <source>
        <dbReference type="HAMAP-Rule" id="MF_00079"/>
    </source>
</evidence>
<sequence length="299" mass="33413">MTDNTRLRIAMQKSGRLSDDSRELLARCGIKINLHTQRLIAMAENMPIDILRVRDDDIPCLVMDGVVDLGIIGENVLEEELLNRRAQGEDPRYFTLRRLDFGGCRLSLATPVDEAWDGPLSLNGKRIATSYPHLLKRYLDQKGISFKSCLLNGSVEVAPRAGLADAICDLVSTGATLEANGLREVEVIYRSKACLIQRDGEMEESKQQLIDKLLTRIQGVIQARESKYIMMHAPTERLDEVIALLPGAERPTILPLAGDQQRVAMHMVSSETLFWETMEKLKALGASSILVLPIEKMME</sequence>
<feature type="chain" id="PRO_0000151866" description="ATP phosphoribosyltransferase">
    <location>
        <begin position="1"/>
        <end position="299"/>
    </location>
</feature>